<proteinExistence type="evidence at protein level"/>
<organism>
    <name type="scientific">Homo sapiens</name>
    <name type="common">Human</name>
    <dbReference type="NCBI Taxonomy" id="9606"/>
    <lineage>
        <taxon>Eukaryota</taxon>
        <taxon>Metazoa</taxon>
        <taxon>Chordata</taxon>
        <taxon>Craniata</taxon>
        <taxon>Vertebrata</taxon>
        <taxon>Euteleostomi</taxon>
        <taxon>Mammalia</taxon>
        <taxon>Eutheria</taxon>
        <taxon>Euarchontoglires</taxon>
        <taxon>Primates</taxon>
        <taxon>Haplorrhini</taxon>
        <taxon>Catarrhini</taxon>
        <taxon>Hominidae</taxon>
        <taxon>Homo</taxon>
    </lineage>
</organism>
<gene>
    <name evidence="13" type="primary">LAGE3</name>
    <name type="synonym">DXS9879E</name>
    <name evidence="8" type="synonym">ESO3</name>
    <name evidence="9" type="synonym">ITBA2</name>
</gene>
<accession>Q14657</accession>
<accession>Q5HY39</accession>
<accession>Q8IZ78</accession>
<dbReference type="EMBL" id="BX936365">
    <property type="status" value="NOT_ANNOTATED_CDS"/>
    <property type="molecule type" value="Genomic_DNA"/>
</dbReference>
<dbReference type="EMBL" id="BC015744">
    <property type="protein sequence ID" value="AAH15744.2"/>
    <property type="molecule type" value="mRNA"/>
</dbReference>
<dbReference type="EMBL" id="BC062330">
    <property type="protein sequence ID" value="AAH62330.1"/>
    <property type="molecule type" value="mRNA"/>
</dbReference>
<dbReference type="EMBL" id="X92896">
    <property type="protein sequence ID" value="CAA63489.1"/>
    <property type="status" value="ALT_FRAME"/>
    <property type="molecule type" value="mRNA"/>
</dbReference>
<dbReference type="CCDS" id="CCDS14753.1"/>
<dbReference type="RefSeq" id="NP_006005.2">
    <property type="nucleotide sequence ID" value="NM_006014.4"/>
</dbReference>
<dbReference type="PDB" id="6GWJ">
    <property type="method" value="X-ray"/>
    <property type="resolution" value="1.95 A"/>
    <property type="chains" value="B=1-143"/>
</dbReference>
<dbReference type="PDBsum" id="6GWJ"/>
<dbReference type="SASBDB" id="Q14657"/>
<dbReference type="SMR" id="Q14657"/>
<dbReference type="BioGRID" id="113888">
    <property type="interactions" value="114"/>
</dbReference>
<dbReference type="ComplexPortal" id="CPX-2252">
    <property type="entry name" value="KEOPS tRNA N6-adenosine threonylcarbamoyltransferase complex"/>
</dbReference>
<dbReference type="CORUM" id="Q14657"/>
<dbReference type="FunCoup" id="Q14657">
    <property type="interactions" value="992"/>
</dbReference>
<dbReference type="IntAct" id="Q14657">
    <property type="interactions" value="71"/>
</dbReference>
<dbReference type="MINT" id="Q14657"/>
<dbReference type="STRING" id="9606.ENSP00000349923"/>
<dbReference type="GlyCosmos" id="Q14657">
    <property type="glycosylation" value="1 site, 2 glycans"/>
</dbReference>
<dbReference type="GlyGen" id="Q14657">
    <property type="glycosylation" value="2 sites, 2 O-linked glycans (1 site)"/>
</dbReference>
<dbReference type="iPTMnet" id="Q14657"/>
<dbReference type="PhosphoSitePlus" id="Q14657"/>
<dbReference type="BioMuta" id="LAGE3"/>
<dbReference type="DMDM" id="54041570"/>
<dbReference type="jPOST" id="Q14657"/>
<dbReference type="MassIVE" id="Q14657"/>
<dbReference type="PaxDb" id="9606-ENSP00000349923"/>
<dbReference type="PeptideAtlas" id="Q14657"/>
<dbReference type="ProteomicsDB" id="60095"/>
<dbReference type="Pumba" id="Q14657"/>
<dbReference type="Antibodypedia" id="31283">
    <property type="antibodies" value="32 antibodies from 18 providers"/>
</dbReference>
<dbReference type="DNASU" id="8270"/>
<dbReference type="Ensembl" id="ENST00000357360.5">
    <property type="protein sequence ID" value="ENSP00000349923.4"/>
    <property type="gene ID" value="ENSG00000196976.8"/>
</dbReference>
<dbReference type="GeneID" id="8270"/>
<dbReference type="KEGG" id="hsa:8270"/>
<dbReference type="MANE-Select" id="ENST00000357360.5">
    <property type="protein sequence ID" value="ENSP00000349923.4"/>
    <property type="RefSeq nucleotide sequence ID" value="NM_006014.5"/>
    <property type="RefSeq protein sequence ID" value="NP_006005.2"/>
</dbReference>
<dbReference type="UCSC" id="uc033fbs.1">
    <property type="organism name" value="human"/>
</dbReference>
<dbReference type="AGR" id="HGNC:26058"/>
<dbReference type="CTD" id="8270"/>
<dbReference type="DisGeNET" id="8270"/>
<dbReference type="GeneCards" id="LAGE3"/>
<dbReference type="HGNC" id="HGNC:26058">
    <property type="gene designation" value="LAGE3"/>
</dbReference>
<dbReference type="HPA" id="ENSG00000196976">
    <property type="expression patterns" value="Low tissue specificity"/>
</dbReference>
<dbReference type="MalaCards" id="LAGE3"/>
<dbReference type="MIM" id="300060">
    <property type="type" value="gene"/>
</dbReference>
<dbReference type="MIM" id="301006">
    <property type="type" value="phenotype"/>
</dbReference>
<dbReference type="neXtProt" id="NX_Q14657"/>
<dbReference type="OpenTargets" id="ENSG00000196976"/>
<dbReference type="Orphanet" id="2065">
    <property type="disease" value="Galloway-Mowat syndrome"/>
</dbReference>
<dbReference type="PharmGKB" id="PA128394540"/>
<dbReference type="VEuPathDB" id="HostDB:ENSG00000196976"/>
<dbReference type="eggNOG" id="ENOG502SBSA">
    <property type="taxonomic scope" value="Eukaryota"/>
</dbReference>
<dbReference type="GeneTree" id="ENSGT00410000025802"/>
<dbReference type="HOGENOM" id="CLU_113770_2_2_1"/>
<dbReference type="InParanoid" id="Q14657"/>
<dbReference type="OMA" id="HQRVIGK"/>
<dbReference type="OrthoDB" id="10025739at2759"/>
<dbReference type="PAN-GO" id="Q14657">
    <property type="GO annotations" value="2 GO annotations based on evolutionary models"/>
</dbReference>
<dbReference type="PhylomeDB" id="Q14657"/>
<dbReference type="TreeFam" id="TF337064"/>
<dbReference type="PathwayCommons" id="Q14657"/>
<dbReference type="Reactome" id="R-HSA-6782315">
    <property type="pathway name" value="tRNA modification in the nucleus and cytosol"/>
</dbReference>
<dbReference type="SignaLink" id="Q14657"/>
<dbReference type="BioGRID-ORCS" id="8270">
    <property type="hits" value="216 hits in 770 CRISPR screens"/>
</dbReference>
<dbReference type="ChiTaRS" id="LAGE3">
    <property type="organism name" value="human"/>
</dbReference>
<dbReference type="GenomeRNAi" id="8270"/>
<dbReference type="Pharos" id="Q14657">
    <property type="development level" value="Tdark"/>
</dbReference>
<dbReference type="PRO" id="PR:Q14657"/>
<dbReference type="Proteomes" id="UP000005640">
    <property type="component" value="Chromosome X"/>
</dbReference>
<dbReference type="RNAct" id="Q14657">
    <property type="molecule type" value="protein"/>
</dbReference>
<dbReference type="Bgee" id="ENSG00000196976">
    <property type="expression patterns" value="Expressed in oocyte and 186 other cell types or tissues"/>
</dbReference>
<dbReference type="GO" id="GO:0005737">
    <property type="term" value="C:cytoplasm"/>
    <property type="evidence" value="ECO:0000314"/>
    <property type="project" value="UniProtKB"/>
</dbReference>
<dbReference type="GO" id="GO:0000408">
    <property type="term" value="C:EKC/KEOPS complex"/>
    <property type="evidence" value="ECO:0000314"/>
    <property type="project" value="UniProtKB"/>
</dbReference>
<dbReference type="GO" id="GO:0016604">
    <property type="term" value="C:nuclear body"/>
    <property type="evidence" value="ECO:0000314"/>
    <property type="project" value="HPA"/>
</dbReference>
<dbReference type="GO" id="GO:0005654">
    <property type="term" value="C:nucleoplasm"/>
    <property type="evidence" value="ECO:0000314"/>
    <property type="project" value="HPA"/>
</dbReference>
<dbReference type="GO" id="GO:0005634">
    <property type="term" value="C:nucleus"/>
    <property type="evidence" value="ECO:0000314"/>
    <property type="project" value="UniProtKB"/>
</dbReference>
<dbReference type="GO" id="GO:0008033">
    <property type="term" value="P:tRNA processing"/>
    <property type="evidence" value="ECO:0007669"/>
    <property type="project" value="UniProtKB-KW"/>
</dbReference>
<dbReference type="GO" id="GO:0070525">
    <property type="term" value="P:tRNA threonylcarbamoyladenosine metabolic process"/>
    <property type="evidence" value="ECO:0000318"/>
    <property type="project" value="GO_Central"/>
</dbReference>
<dbReference type="FunFam" id="3.30.310.50:FF:000005">
    <property type="entry name" value="L antigen family member 3"/>
    <property type="match status" value="1"/>
</dbReference>
<dbReference type="Gene3D" id="3.30.310.50">
    <property type="entry name" value="Alpha-D-phosphohexomutase, C-terminal domain"/>
    <property type="match status" value="1"/>
</dbReference>
<dbReference type="InterPro" id="IPR015419">
    <property type="entry name" value="CTAG/Pcc1"/>
</dbReference>
<dbReference type="PANTHER" id="PTHR31283">
    <property type="entry name" value="EKC/KEOPS COMPLEX SUBUNIT PCC1 FAMILY MEMBER"/>
    <property type="match status" value="1"/>
</dbReference>
<dbReference type="PANTHER" id="PTHR31283:SF19">
    <property type="entry name" value="EKC_KEOPS COMPLEX SUBUNIT LAGE3"/>
    <property type="match status" value="1"/>
</dbReference>
<dbReference type="Pfam" id="PF09341">
    <property type="entry name" value="Pcc1"/>
    <property type="match status" value="1"/>
</dbReference>
<sequence>MRDADADAGGGADGGDGRGGHSCRGGVDTAAAPAGGAPPAHAPGPGRDAASAARGSRMRPHIFTLSVPFPTPLEAEIAHGSLAPDAEPHQRVVGKDLTVSGRILVVRWKAEDCRLLRISVINFLDQLSLVVRTMQRFGPPVSR</sequence>
<reference key="1">
    <citation type="journal article" date="2005" name="Nature">
        <title>The DNA sequence of the human X chromosome.</title>
        <authorList>
            <person name="Ross M.T."/>
            <person name="Grafham D.V."/>
            <person name="Coffey A.J."/>
            <person name="Scherer S."/>
            <person name="McLay K."/>
            <person name="Muzny D."/>
            <person name="Platzer M."/>
            <person name="Howell G.R."/>
            <person name="Burrows C."/>
            <person name="Bird C.P."/>
            <person name="Frankish A."/>
            <person name="Lovell F.L."/>
            <person name="Howe K.L."/>
            <person name="Ashurst J.L."/>
            <person name="Fulton R.S."/>
            <person name="Sudbrak R."/>
            <person name="Wen G."/>
            <person name="Jones M.C."/>
            <person name="Hurles M.E."/>
            <person name="Andrews T.D."/>
            <person name="Scott C.E."/>
            <person name="Searle S."/>
            <person name="Ramser J."/>
            <person name="Whittaker A."/>
            <person name="Deadman R."/>
            <person name="Carter N.P."/>
            <person name="Hunt S.E."/>
            <person name="Chen R."/>
            <person name="Cree A."/>
            <person name="Gunaratne P."/>
            <person name="Havlak P."/>
            <person name="Hodgson A."/>
            <person name="Metzker M.L."/>
            <person name="Richards S."/>
            <person name="Scott G."/>
            <person name="Steffen D."/>
            <person name="Sodergren E."/>
            <person name="Wheeler D.A."/>
            <person name="Worley K.C."/>
            <person name="Ainscough R."/>
            <person name="Ambrose K.D."/>
            <person name="Ansari-Lari M.A."/>
            <person name="Aradhya S."/>
            <person name="Ashwell R.I."/>
            <person name="Babbage A.K."/>
            <person name="Bagguley C.L."/>
            <person name="Ballabio A."/>
            <person name="Banerjee R."/>
            <person name="Barker G.E."/>
            <person name="Barlow K.F."/>
            <person name="Barrett I.P."/>
            <person name="Bates K.N."/>
            <person name="Beare D.M."/>
            <person name="Beasley H."/>
            <person name="Beasley O."/>
            <person name="Beck A."/>
            <person name="Bethel G."/>
            <person name="Blechschmidt K."/>
            <person name="Brady N."/>
            <person name="Bray-Allen S."/>
            <person name="Bridgeman A.M."/>
            <person name="Brown A.J."/>
            <person name="Brown M.J."/>
            <person name="Bonnin D."/>
            <person name="Bruford E.A."/>
            <person name="Buhay C."/>
            <person name="Burch P."/>
            <person name="Burford D."/>
            <person name="Burgess J."/>
            <person name="Burrill W."/>
            <person name="Burton J."/>
            <person name="Bye J.M."/>
            <person name="Carder C."/>
            <person name="Carrel L."/>
            <person name="Chako J."/>
            <person name="Chapman J.C."/>
            <person name="Chavez D."/>
            <person name="Chen E."/>
            <person name="Chen G."/>
            <person name="Chen Y."/>
            <person name="Chen Z."/>
            <person name="Chinault C."/>
            <person name="Ciccodicola A."/>
            <person name="Clark S.Y."/>
            <person name="Clarke G."/>
            <person name="Clee C.M."/>
            <person name="Clegg S."/>
            <person name="Clerc-Blankenburg K."/>
            <person name="Clifford K."/>
            <person name="Cobley V."/>
            <person name="Cole C.G."/>
            <person name="Conquer J.S."/>
            <person name="Corby N."/>
            <person name="Connor R.E."/>
            <person name="David R."/>
            <person name="Davies J."/>
            <person name="Davis C."/>
            <person name="Davis J."/>
            <person name="Delgado O."/>
            <person name="Deshazo D."/>
            <person name="Dhami P."/>
            <person name="Ding Y."/>
            <person name="Dinh H."/>
            <person name="Dodsworth S."/>
            <person name="Draper H."/>
            <person name="Dugan-Rocha S."/>
            <person name="Dunham A."/>
            <person name="Dunn M."/>
            <person name="Durbin K.J."/>
            <person name="Dutta I."/>
            <person name="Eades T."/>
            <person name="Ellwood M."/>
            <person name="Emery-Cohen A."/>
            <person name="Errington H."/>
            <person name="Evans K.L."/>
            <person name="Faulkner L."/>
            <person name="Francis F."/>
            <person name="Frankland J."/>
            <person name="Fraser A.E."/>
            <person name="Galgoczy P."/>
            <person name="Gilbert J."/>
            <person name="Gill R."/>
            <person name="Gloeckner G."/>
            <person name="Gregory S.G."/>
            <person name="Gribble S."/>
            <person name="Griffiths C."/>
            <person name="Grocock R."/>
            <person name="Gu Y."/>
            <person name="Gwilliam R."/>
            <person name="Hamilton C."/>
            <person name="Hart E.A."/>
            <person name="Hawes A."/>
            <person name="Heath P.D."/>
            <person name="Heitmann K."/>
            <person name="Hennig S."/>
            <person name="Hernandez J."/>
            <person name="Hinzmann B."/>
            <person name="Ho S."/>
            <person name="Hoffs M."/>
            <person name="Howden P.J."/>
            <person name="Huckle E.J."/>
            <person name="Hume J."/>
            <person name="Hunt P.J."/>
            <person name="Hunt A.R."/>
            <person name="Isherwood J."/>
            <person name="Jacob L."/>
            <person name="Johnson D."/>
            <person name="Jones S."/>
            <person name="de Jong P.J."/>
            <person name="Joseph S.S."/>
            <person name="Keenan S."/>
            <person name="Kelly S."/>
            <person name="Kershaw J.K."/>
            <person name="Khan Z."/>
            <person name="Kioschis P."/>
            <person name="Klages S."/>
            <person name="Knights A.J."/>
            <person name="Kosiura A."/>
            <person name="Kovar-Smith C."/>
            <person name="Laird G.K."/>
            <person name="Langford C."/>
            <person name="Lawlor S."/>
            <person name="Leversha M."/>
            <person name="Lewis L."/>
            <person name="Liu W."/>
            <person name="Lloyd C."/>
            <person name="Lloyd D.M."/>
            <person name="Loulseged H."/>
            <person name="Loveland J.E."/>
            <person name="Lovell J.D."/>
            <person name="Lozado R."/>
            <person name="Lu J."/>
            <person name="Lyne R."/>
            <person name="Ma J."/>
            <person name="Maheshwari M."/>
            <person name="Matthews L.H."/>
            <person name="McDowall J."/>
            <person name="McLaren S."/>
            <person name="McMurray A."/>
            <person name="Meidl P."/>
            <person name="Meitinger T."/>
            <person name="Milne S."/>
            <person name="Miner G."/>
            <person name="Mistry S.L."/>
            <person name="Morgan M."/>
            <person name="Morris S."/>
            <person name="Mueller I."/>
            <person name="Mullikin J.C."/>
            <person name="Nguyen N."/>
            <person name="Nordsiek G."/>
            <person name="Nyakatura G."/>
            <person name="O'dell C.N."/>
            <person name="Okwuonu G."/>
            <person name="Palmer S."/>
            <person name="Pandian R."/>
            <person name="Parker D."/>
            <person name="Parrish J."/>
            <person name="Pasternak S."/>
            <person name="Patel D."/>
            <person name="Pearce A.V."/>
            <person name="Pearson D.M."/>
            <person name="Pelan S.E."/>
            <person name="Perez L."/>
            <person name="Porter K.M."/>
            <person name="Ramsey Y."/>
            <person name="Reichwald K."/>
            <person name="Rhodes S."/>
            <person name="Ridler K.A."/>
            <person name="Schlessinger D."/>
            <person name="Schueler M.G."/>
            <person name="Sehra H.K."/>
            <person name="Shaw-Smith C."/>
            <person name="Shen H."/>
            <person name="Sheridan E.M."/>
            <person name="Shownkeen R."/>
            <person name="Skuce C.D."/>
            <person name="Smith M.L."/>
            <person name="Sotheran E.C."/>
            <person name="Steingruber H.E."/>
            <person name="Steward C.A."/>
            <person name="Storey R."/>
            <person name="Swann R.M."/>
            <person name="Swarbreck D."/>
            <person name="Tabor P.E."/>
            <person name="Taudien S."/>
            <person name="Taylor T."/>
            <person name="Teague B."/>
            <person name="Thomas K."/>
            <person name="Thorpe A."/>
            <person name="Timms K."/>
            <person name="Tracey A."/>
            <person name="Trevanion S."/>
            <person name="Tromans A.C."/>
            <person name="d'Urso M."/>
            <person name="Verduzco D."/>
            <person name="Villasana D."/>
            <person name="Waldron L."/>
            <person name="Wall M."/>
            <person name="Wang Q."/>
            <person name="Warren J."/>
            <person name="Warry G.L."/>
            <person name="Wei X."/>
            <person name="West A."/>
            <person name="Whitehead S.L."/>
            <person name="Whiteley M.N."/>
            <person name="Wilkinson J.E."/>
            <person name="Willey D.L."/>
            <person name="Williams G."/>
            <person name="Williams L."/>
            <person name="Williamson A."/>
            <person name="Williamson H."/>
            <person name="Wilming L."/>
            <person name="Woodmansey R.L."/>
            <person name="Wray P.W."/>
            <person name="Yen J."/>
            <person name="Zhang J."/>
            <person name="Zhou J."/>
            <person name="Zoghbi H."/>
            <person name="Zorilla S."/>
            <person name="Buck D."/>
            <person name="Reinhardt R."/>
            <person name="Poustka A."/>
            <person name="Rosenthal A."/>
            <person name="Lehrach H."/>
            <person name="Meindl A."/>
            <person name="Minx P.J."/>
            <person name="Hillier L.W."/>
            <person name="Willard H.F."/>
            <person name="Wilson R.K."/>
            <person name="Waterston R.H."/>
            <person name="Rice C.M."/>
            <person name="Vaudin M."/>
            <person name="Coulson A."/>
            <person name="Nelson D.L."/>
            <person name="Weinstock G."/>
            <person name="Sulston J.E."/>
            <person name="Durbin R.M."/>
            <person name="Hubbard T."/>
            <person name="Gibbs R.A."/>
            <person name="Beck S."/>
            <person name="Rogers J."/>
            <person name="Bentley D.R."/>
        </authorList>
    </citation>
    <scope>NUCLEOTIDE SEQUENCE [LARGE SCALE GENOMIC DNA]</scope>
</reference>
<reference key="2">
    <citation type="journal article" date="2004" name="Genome Res.">
        <title>The status, quality, and expansion of the NIH full-length cDNA project: the Mammalian Gene Collection (MGC).</title>
        <authorList>
            <consortium name="The MGC Project Team"/>
        </authorList>
    </citation>
    <scope>NUCLEOTIDE SEQUENCE [LARGE SCALE MRNA]</scope>
    <source>
        <tissue>Blood</tissue>
        <tissue>Pancreas</tissue>
    </source>
</reference>
<reference key="3">
    <citation type="journal article" date="1996" name="Genomics">
        <title>Characterization and fine localization of two new genes in Xq28 using the genomic sequence/EST database screening approach.</title>
        <authorList>
            <person name="Faranda S."/>
            <person name="Frattini A."/>
            <person name="Zucchi I."/>
            <person name="Patrosso C."/>
            <person name="Milanesi L."/>
            <person name="Montagna C."/>
            <person name="Vezzoni P."/>
        </authorList>
    </citation>
    <scope>NUCLEOTIDE SEQUENCE [MRNA] OF 2-143</scope>
    <scope>TISSUE SPECIFICITY</scope>
    <source>
        <tissue>Liver</tissue>
    </source>
</reference>
<reference key="4">
    <citation type="journal article" date="2002" name="Gene">
        <title>A new member of the NY-ESO-1 gene family is ubiquitously expressed in somatic tissues and evolutionarily conserved.</title>
        <authorList>
            <person name="Alpen B."/>
            <person name="Guere A.O."/>
            <person name="Scanlan M.J."/>
            <person name="Old L.J."/>
            <person name="Chen Y.-T."/>
        </authorList>
    </citation>
    <scope>IDENTIFICATION</scope>
    <scope>TISSUE SPECIFICITY</scope>
</reference>
<reference key="5">
    <citation type="journal article" date="2011" name="BMC Syst. Biol.">
        <title>Initial characterization of the human central proteome.</title>
        <authorList>
            <person name="Burkard T.R."/>
            <person name="Planyavsky M."/>
            <person name="Kaupe I."/>
            <person name="Breitwieser F.P."/>
            <person name="Buerckstuemmer T."/>
            <person name="Bennett K.L."/>
            <person name="Superti-Furga G."/>
            <person name="Colinge J."/>
        </authorList>
    </citation>
    <scope>IDENTIFICATION BY MASS SPECTROMETRY [LARGE SCALE ANALYSIS]</scope>
</reference>
<reference key="6">
    <citation type="journal article" date="2012" name="PLoS ONE">
        <title>The human EKC/KEOPS complex is recruited to Cullin2 ubiquitin ligases by the human tumour antigen PRAME.</title>
        <authorList>
            <person name="Costessi A."/>
            <person name="Mahrour N."/>
            <person name="Sharma V."/>
            <person name="Stunnenberg R."/>
            <person name="Stoel M.A."/>
            <person name="Tijchon E."/>
            <person name="Conaway J.W."/>
            <person name="Conaway R.C."/>
            <person name="Stunnenberg H.G."/>
        </authorList>
    </citation>
    <scope>IDENTIFICATION IN THE EKC/KEOPS COMPLEX</scope>
    <scope>SUBCELLULAR LOCATION</scope>
</reference>
<reference key="7">
    <citation type="journal article" date="2014" name="J. Proteomics">
        <title>An enzyme assisted RP-RPLC approach for in-depth analysis of human liver phosphoproteome.</title>
        <authorList>
            <person name="Bian Y."/>
            <person name="Song C."/>
            <person name="Cheng K."/>
            <person name="Dong M."/>
            <person name="Wang F."/>
            <person name="Huang J."/>
            <person name="Sun D."/>
            <person name="Wang L."/>
            <person name="Ye M."/>
            <person name="Zou H."/>
        </authorList>
    </citation>
    <scope>IDENTIFICATION BY MASS SPECTROMETRY [LARGE SCALE ANALYSIS]</scope>
    <source>
        <tissue>Liver</tissue>
    </source>
</reference>
<reference key="8">
    <citation type="journal article" date="2017" name="Nucleic Acids Res.">
        <title>Proteomic analysis of the human KEOPS complex identifies C14ORF142 as a core subunit homologous to yeast Gon7.</title>
        <authorList>
            <person name="Wan L.C."/>
            <person name="Maisonneuve P."/>
            <person name="Szilard R.K."/>
            <person name="Lambert J.P."/>
            <person name="Ng T.F."/>
            <person name="Manczyk N."/>
            <person name="Huang H."/>
            <person name="Laister R."/>
            <person name="Caudy A.A."/>
            <person name="Gingras A.C."/>
            <person name="Durocher D."/>
            <person name="Sicheri F."/>
        </authorList>
    </citation>
    <scope>IDENTIFICATION IN THE EKC/KEOPS COMPLEX</scope>
    <scope>SUBCELLULAR LOCATION</scope>
</reference>
<reference evidence="14" key="9">
    <citation type="journal article" date="2019" name="Nat. Commun.">
        <title>Defects in t6A tRNA modification due to GON7 and YRDC mutations lead to Galloway-Mowat syndrome.</title>
        <authorList>
            <person name="Arrondel C."/>
            <person name="Missoury S."/>
            <person name="Snoek R."/>
            <person name="Patat J."/>
            <person name="Menara G."/>
            <person name="Collinet B."/>
            <person name="Liger D."/>
            <person name="Durand D."/>
            <person name="Gribouval O."/>
            <person name="Boyer O."/>
            <person name="Buscara L."/>
            <person name="Martin G."/>
            <person name="Machuca E."/>
            <person name="Nevo F."/>
            <person name="Lescop E."/>
            <person name="Braun D.A."/>
            <person name="Boschat A.C."/>
            <person name="Sanquer S."/>
            <person name="Guerrera I.C."/>
            <person name="Revy P."/>
            <person name="Parisot M."/>
            <person name="Masson C."/>
            <person name="Boddaert N."/>
            <person name="Charbit M."/>
            <person name="Decramer S."/>
            <person name="Novo R."/>
            <person name="Macher M.A."/>
            <person name="Ranchin B."/>
            <person name="Bacchetta J."/>
            <person name="Laurent A."/>
            <person name="Collardeau-Frachon S."/>
            <person name="van Eerde A.M."/>
            <person name="Hildebrandt F."/>
            <person name="Magen D."/>
            <person name="Antignac C."/>
            <person name="van Tilbeurgh H."/>
            <person name="Mollet G."/>
        </authorList>
    </citation>
    <scope>X-RAY CRYSTALLOGRAPHY (1.95 ANGSTROMS) IN COMPLEX WITH GON7 AND OSGEP</scope>
    <scope>IDENTIFICATION IN THE EKC/KEOPS COMPLEX</scope>
</reference>
<reference key="10">
    <citation type="journal article" date="2017" name="Nat. Genet.">
        <title>Mutations in KEOPS-complex genes cause nephrotic syndrome with primary microcephaly.</title>
        <authorList>
            <person name="Braun D.A."/>
            <person name="Rao J."/>
            <person name="Mollet G."/>
            <person name="Schapiro D."/>
            <person name="Daugeron M.C."/>
            <person name="Tan W."/>
            <person name="Gribouval O."/>
            <person name="Boyer O."/>
            <person name="Revy P."/>
            <person name="Jobst-Schwan T."/>
            <person name="Schmidt J.M."/>
            <person name="Lawson J.A."/>
            <person name="Schanze D."/>
            <person name="Ashraf S."/>
            <person name="Ullmann J.F.P."/>
            <person name="Hoogstraten C.A."/>
            <person name="Boddaert N."/>
            <person name="Collinet B."/>
            <person name="Martin G."/>
            <person name="Liger D."/>
            <person name="Lovric S."/>
            <person name="Furlano M."/>
            <person name="Guerrera I.C."/>
            <person name="Sanchez-Ferras O."/>
            <person name="Hu J.F."/>
            <person name="Boschat A.C."/>
            <person name="Sanquer S."/>
            <person name="Menten B."/>
            <person name="Vergult S."/>
            <person name="De Rocker N."/>
            <person name="Airik M."/>
            <person name="Hermle T."/>
            <person name="Shril S."/>
            <person name="Widmeier E."/>
            <person name="Gee H.Y."/>
            <person name="Choi W.I."/>
            <person name="Sadowski C.E."/>
            <person name="Pabst W.L."/>
            <person name="Warejko J.K."/>
            <person name="Daga A."/>
            <person name="Basta T."/>
            <person name="Matejas V."/>
            <person name="Scharmann K."/>
            <person name="Kienast S.D."/>
            <person name="Behnam B."/>
            <person name="Beeson B."/>
            <person name="Begtrup A."/>
            <person name="Bruce M."/>
            <person name="Ch'ng G.S."/>
            <person name="Lin S.P."/>
            <person name="Chang J.H."/>
            <person name="Chen C.H."/>
            <person name="Cho M.T."/>
            <person name="Gaffney P.M."/>
            <person name="Gipson P.E."/>
            <person name="Hsu C.H."/>
            <person name="Kari J.A."/>
            <person name="Ke Y.Y."/>
            <person name="Kiraly-Borri C."/>
            <person name="Lai W.M."/>
            <person name="Lemyre E."/>
            <person name="Littlejohn R.O."/>
            <person name="Masri A."/>
            <person name="Moghtaderi M."/>
            <person name="Nakamura K."/>
            <person name="Ozaltin F."/>
            <person name="Praet M."/>
            <person name="Prasad C."/>
            <person name="Prytula A."/>
            <person name="Roeder E.R."/>
            <person name="Rump P."/>
            <person name="Schnur R.E."/>
            <person name="Shiihara T."/>
            <person name="Sinha M.D."/>
            <person name="Soliman N.A."/>
            <person name="Soulami K."/>
            <person name="Sweetser D.A."/>
            <person name="Tsai W.H."/>
            <person name="Tsai J.D."/>
            <person name="Topaloglu R."/>
            <person name="Vester U."/>
            <person name="Viskochil D.H."/>
            <person name="Vatanavicharn N."/>
            <person name="Waxler J.L."/>
            <person name="Wierenga K.J."/>
            <person name="Wolf M.T.F."/>
            <person name="Wong S.N."/>
            <person name="Leidel S.A."/>
            <person name="Truglio G."/>
            <person name="Dedon P.C."/>
            <person name="Poduri A."/>
            <person name="Mane S."/>
            <person name="Lifton R.P."/>
            <person name="Bouchard M."/>
            <person name="Kannu P."/>
            <person name="Chitayat D."/>
            <person name="Magen D."/>
            <person name="Callewaert B."/>
            <person name="van Tilbeurgh H."/>
            <person name="Zenker M."/>
            <person name="Antignac C."/>
            <person name="Hildebrandt F."/>
        </authorList>
    </citation>
    <scope>INVOLVEMENT IN GAMOS2</scope>
    <scope>VARIANTS GAMOS2 PHE-106 AND SER-137</scope>
    <scope>IDENTIFICATION IN THE EKC/KEOPS COMPLEX</scope>
    <scope>SUBCELLULAR LOCATION</scope>
</reference>
<comment type="function">
    <text evidence="11 12">Component of the EKC/KEOPS complex that is required for the formation of a threonylcarbamoyl group on adenosine at position 37 (t(6)A37) in tRNAs that read codons beginning with adenine (PubMed:22912744, PubMed:27903914). The complex is probably involved in the transfer of the threonylcarbamoyl moiety of threonylcarbamoyl-AMP (TC-AMP) to the N6 group of A37 (PubMed:22912744, PubMed:27903914). LAGE3 functions as a dimerization module for the complex (PubMed:22912744, PubMed:27903914).</text>
</comment>
<comment type="subunit">
    <text evidence="3 4 5 6">Component of the EKC/KEOPS complex composed of at least GON7, TP53RK, TPRKB, OSGEP and LAGE3; the whole complex dimerizes.</text>
</comment>
<comment type="interaction">
    <interactant intactId="EBI-1052105">
        <id>Q14657</id>
    </interactant>
    <interactant intactId="EBI-357530">
        <id>Q9ULX6</id>
        <label>AKAP8L</label>
    </interactant>
    <organismsDiffer>false</organismsDiffer>
    <experiments>3</experiments>
</comment>
<comment type="interaction">
    <interactant intactId="EBI-1052105">
        <id>Q14657</id>
    </interactant>
    <interactant intactId="EBI-3867333">
        <id>A8MQ03</id>
        <label>CYSRT1</label>
    </interactant>
    <organismsDiffer>false</organismsDiffer>
    <experiments>3</experiments>
</comment>
<comment type="interaction">
    <interactant intactId="EBI-1052105">
        <id>Q14657</id>
    </interactant>
    <interactant intactId="EBI-5916454">
        <id>A6NEM1</id>
        <label>GOLGA6L9</label>
    </interactant>
    <organismsDiffer>false</organismsDiffer>
    <experiments>3</experiments>
</comment>
<comment type="interaction">
    <interactant intactId="EBI-1052105">
        <id>Q14657</id>
    </interactant>
    <interactant intactId="EBI-6256593">
        <id>Q9BXV9</id>
        <label>GON7</label>
    </interactant>
    <organismsDiffer>false</organismsDiffer>
    <experiments>17</experiments>
</comment>
<comment type="interaction">
    <interactant intactId="EBI-1052105">
        <id>Q14657</id>
    </interactant>
    <interactant intactId="EBI-7116203">
        <id>O75031</id>
        <label>HSF2BP</label>
    </interactant>
    <organismsDiffer>false</organismsDiffer>
    <experiments>3</experiments>
</comment>
<comment type="interaction">
    <interactant intactId="EBI-1052105">
        <id>Q14657</id>
    </interactant>
    <interactant intactId="EBI-10236738">
        <id>A0A0C4DGM4</id>
        <label>HYKK</label>
    </interactant>
    <organismsDiffer>false</organismsDiffer>
    <experiments>3</experiments>
</comment>
<comment type="interaction">
    <interactant intactId="EBI-1052105">
        <id>Q14657</id>
    </interactant>
    <interactant intactId="EBI-10171697">
        <id>Q6A162</id>
        <label>KRT40</label>
    </interactant>
    <organismsDiffer>false</organismsDiffer>
    <experiments>6</experiments>
</comment>
<comment type="interaction">
    <interactant intactId="EBI-1052105">
        <id>Q14657</id>
    </interactant>
    <interactant intactId="EBI-10171774">
        <id>P60410</id>
        <label>KRTAP10-8</label>
    </interactant>
    <organismsDiffer>false</organismsDiffer>
    <experiments>3</experiments>
</comment>
<comment type="interaction">
    <interactant intactId="EBI-1052105">
        <id>Q14657</id>
    </interactant>
    <interactant intactId="EBI-22311199">
        <id>Q3LI67</id>
        <label>KRTAP6-3</label>
    </interactant>
    <organismsDiffer>false</organismsDiffer>
    <experiments>3</experiments>
</comment>
<comment type="interaction">
    <interactant intactId="EBI-1052105">
        <id>Q14657</id>
    </interactant>
    <interactant intactId="EBI-10172526">
        <id>Q9UJV3-2</id>
        <label>MID2</label>
    </interactant>
    <organismsDiffer>false</organismsDiffer>
    <experiments>3</experiments>
</comment>
<comment type="interaction">
    <interactant intactId="EBI-1052105">
        <id>Q14657</id>
    </interactant>
    <interactant intactId="EBI-2548751">
        <id>Q8TD10</id>
        <label>MIPOL1</label>
    </interactant>
    <organismsDiffer>false</organismsDiffer>
    <experiments>3</experiments>
</comment>
<comment type="interaction">
    <interactant intactId="EBI-1052105">
        <id>Q14657</id>
    </interactant>
    <interactant intactId="EBI-2340269">
        <id>Q13064</id>
        <label>MKRN3</label>
    </interactant>
    <organismsDiffer>false</organismsDiffer>
    <experiments>3</experiments>
</comment>
<comment type="interaction">
    <interactant intactId="EBI-1052105">
        <id>Q14657</id>
    </interactant>
    <interactant intactId="EBI-1056510">
        <id>Q9NPF4</id>
        <label>OSGEP</label>
    </interactant>
    <organismsDiffer>false</organismsDiffer>
    <experiments>6</experiments>
</comment>
<comment type="interaction">
    <interactant intactId="EBI-1052105">
        <id>Q14657</id>
    </interactant>
    <interactant intactId="EBI-742764">
        <id>O76083</id>
        <label>PDE9A</label>
    </interactant>
    <organismsDiffer>false</organismsDiffer>
    <experiments>3</experiments>
</comment>
<comment type="interaction">
    <interactant intactId="EBI-1052105">
        <id>Q14657</id>
    </interactant>
    <interactant intactId="EBI-11524542">
        <id>O76083-2</id>
        <label>PDE9A</label>
    </interactant>
    <organismsDiffer>false</organismsDiffer>
    <experiments>3</experiments>
</comment>
<comment type="interaction">
    <interactant intactId="EBI-1052105">
        <id>Q14657</id>
    </interactant>
    <interactant intactId="EBI-1057560">
        <id>Q9NW61</id>
        <label>PLEKHJ1</label>
    </interactant>
    <organismsDiffer>false</organismsDiffer>
    <experiments>3</experiments>
</comment>
<comment type="interaction">
    <interactant intactId="EBI-1052105">
        <id>Q14657</id>
    </interactant>
    <interactant intactId="EBI-302345">
        <id>Q8ND90</id>
        <label>PNMA1</label>
    </interactant>
    <organismsDiffer>false</organismsDiffer>
    <experiments>3</experiments>
</comment>
<comment type="interaction">
    <interactant intactId="EBI-1052105">
        <id>Q14657</id>
    </interactant>
    <interactant intactId="EBI-366574">
        <id>O75817</id>
        <label>POP7</label>
    </interactant>
    <organismsDiffer>false</organismsDiffer>
    <experiments>4</experiments>
</comment>
<comment type="interaction">
    <interactant intactId="EBI-1052105">
        <id>Q14657</id>
    </interactant>
    <interactant intactId="EBI-603300">
        <id>P28065</id>
        <label>PSMB9</label>
    </interactant>
    <organismsDiffer>false</organismsDiffer>
    <experiments>4</experiments>
</comment>
<comment type="interaction">
    <interactant intactId="EBI-1052105">
        <id>Q14657</id>
    </interactant>
    <interactant intactId="EBI-740098">
        <id>P36406</id>
        <label>TRIM23</label>
    </interactant>
    <organismsDiffer>false</organismsDiffer>
    <experiments>3</experiments>
</comment>
<comment type="interaction">
    <interactant intactId="EBI-1052105">
        <id>Q14657</id>
    </interactant>
    <interactant intactId="EBI-719493">
        <id>P14373</id>
        <label>TRIM27</label>
    </interactant>
    <organismsDiffer>false</organismsDiffer>
    <experiments>3</experiments>
</comment>
<comment type="interaction">
    <interactant intactId="EBI-1052105">
        <id>Q14657</id>
    </interactant>
    <interactant intactId="EBI-2559305">
        <id>A5D8V6</id>
        <label>VPS37C</label>
    </interactant>
    <organismsDiffer>false</organismsDiffer>
    <experiments>3</experiments>
</comment>
<comment type="subcellular location">
    <subcellularLocation>
        <location evidence="5">Cytoplasm</location>
    </subcellularLocation>
    <subcellularLocation>
        <location evidence="3 4 5">Nucleus</location>
    </subcellularLocation>
</comment>
<comment type="tissue specificity">
    <text evidence="2 7">Ubiquitous.</text>
</comment>
<comment type="disease" evidence="5">
    <disease id="DI-05105">
        <name>Galloway-Mowat syndrome 2, X-linked</name>
        <acronym>GAMOS2</acronym>
        <description>A form of Galloway-Mowat syndrome, a severe renal-neurological disease characterized by early-onset nephrotic syndrome associated with microcephaly, central nervous system abnormalities, developmental delays, and a propensity for seizures. Brain anomalies include gyration defects ranging from lissencephaly to pachygyria and polymicrogyria, and cerebellar hypoplasia. Most patients show facial dysmorphism characterized by a small, narrow forehead, large/floppy ears, deep-set eyes, hypertelorism and micrognathia. Additional variable features are visual impairment and arachnodactyly. Most patients die in early childhood.</description>
        <dbReference type="MIM" id="301006"/>
    </disease>
    <text>The disease is caused by variants affecting the gene represented in this entry.</text>
</comment>
<comment type="similarity">
    <text evidence="10">Belongs to the CTAG/PCC1 family.</text>
</comment>
<comment type="sequence caution" evidence="10">
    <conflict type="frameshift">
        <sequence resource="EMBL-CDS" id="CAA63489"/>
    </conflict>
</comment>
<keyword id="KW-0002">3D-structure</keyword>
<keyword id="KW-0963">Cytoplasm</keyword>
<keyword id="KW-0225">Disease variant</keyword>
<keyword id="KW-0887">Epilepsy</keyword>
<keyword id="KW-0991">Intellectual disability</keyword>
<keyword id="KW-0539">Nucleus</keyword>
<keyword id="KW-1267">Proteomics identification</keyword>
<keyword id="KW-1185">Reference proteome</keyword>
<keyword id="KW-0819">tRNA processing</keyword>
<name>LAGE3_HUMAN</name>
<protein>
    <recommendedName>
        <fullName evidence="10">EKC/KEOPS complex subunit LAGE3</fullName>
    </recommendedName>
    <alternativeName>
        <fullName evidence="8">L antigen family member 3</fullName>
    </alternativeName>
    <alternativeName>
        <fullName evidence="8">Protein ESO-3</fullName>
    </alternativeName>
    <alternativeName>
        <fullName evidence="9">Protein ITBA2</fullName>
    </alternativeName>
</protein>
<evidence type="ECO:0000256" key="1">
    <source>
        <dbReference type="SAM" id="MobiDB-lite"/>
    </source>
</evidence>
<evidence type="ECO:0000269" key="2">
    <source>
    </source>
</evidence>
<evidence type="ECO:0000269" key="3">
    <source>
    </source>
</evidence>
<evidence type="ECO:0000269" key="4">
    <source>
    </source>
</evidence>
<evidence type="ECO:0000269" key="5">
    <source>
    </source>
</evidence>
<evidence type="ECO:0000269" key="6">
    <source>
    </source>
</evidence>
<evidence type="ECO:0000269" key="7">
    <source>
    </source>
</evidence>
<evidence type="ECO:0000303" key="8">
    <source>
    </source>
</evidence>
<evidence type="ECO:0000303" key="9">
    <source>
    </source>
</evidence>
<evidence type="ECO:0000305" key="10"/>
<evidence type="ECO:0000305" key="11">
    <source>
    </source>
</evidence>
<evidence type="ECO:0000305" key="12">
    <source>
    </source>
</evidence>
<evidence type="ECO:0000312" key="13">
    <source>
        <dbReference type="HGNC" id="HGNC:26058"/>
    </source>
</evidence>
<evidence type="ECO:0007744" key="14">
    <source>
        <dbReference type="PDB" id="6GWJ"/>
    </source>
</evidence>
<evidence type="ECO:0007829" key="15">
    <source>
        <dbReference type="PDB" id="6GWJ"/>
    </source>
</evidence>
<feature type="chain" id="PRO_0000218924" description="EKC/KEOPS complex subunit LAGE3">
    <location>
        <begin position="1"/>
        <end position="143"/>
    </location>
</feature>
<feature type="region of interest" description="Disordered" evidence="1">
    <location>
        <begin position="1"/>
        <end position="57"/>
    </location>
</feature>
<feature type="compositionally biased region" description="Low complexity" evidence="1">
    <location>
        <begin position="30"/>
        <end position="55"/>
    </location>
</feature>
<feature type="sequence variant" id="VAR_080374" description="In GAMOS2; dbSNP:rs1557211306." evidence="5">
    <original>V</original>
    <variation>F</variation>
    <location>
        <position position="106"/>
    </location>
</feature>
<feature type="sequence variant" id="VAR_080375" description="In GAMOS2; dbSNP:rs1557211209." evidence="5">
    <original>F</original>
    <variation>S</variation>
    <location>
        <position position="137"/>
    </location>
</feature>
<feature type="strand" evidence="15">
    <location>
        <begin position="61"/>
        <end position="68"/>
    </location>
</feature>
<feature type="helix" evidence="15">
    <location>
        <begin position="72"/>
        <end position="82"/>
    </location>
</feature>
<feature type="turn" evidence="15">
    <location>
        <begin position="88"/>
        <end position="92"/>
    </location>
</feature>
<feature type="strand" evidence="15">
    <location>
        <begin position="93"/>
        <end position="100"/>
    </location>
</feature>
<feature type="strand" evidence="15">
    <location>
        <begin position="103"/>
        <end position="111"/>
    </location>
</feature>
<feature type="helix" evidence="15">
    <location>
        <begin position="113"/>
        <end position="137"/>
    </location>
</feature>